<keyword id="KW-0027">Amidation</keyword>
<keyword id="KW-1015">Disulfide bond</keyword>
<keyword id="KW-0964">Secreted</keyword>
<keyword id="KW-0732">Signal</keyword>
<keyword id="KW-0800">Toxin</keyword>
<dbReference type="EMBL" id="GU046309">
    <property type="protein sequence ID" value="ADC80510.1"/>
    <property type="molecule type" value="mRNA"/>
</dbReference>
<dbReference type="ConoServer" id="4201">
    <property type="toxin name" value="Vc1.3 precursor"/>
</dbReference>
<dbReference type="GO" id="GO:0005576">
    <property type="term" value="C:extracellular region"/>
    <property type="evidence" value="ECO:0007669"/>
    <property type="project" value="UniProtKB-SubCell"/>
</dbReference>
<dbReference type="GO" id="GO:0030550">
    <property type="term" value="F:acetylcholine receptor inhibitor activity"/>
    <property type="evidence" value="ECO:0007669"/>
    <property type="project" value="InterPro"/>
</dbReference>
<dbReference type="GO" id="GO:0090729">
    <property type="term" value="F:toxin activity"/>
    <property type="evidence" value="ECO:0007669"/>
    <property type="project" value="UniProtKB-KW"/>
</dbReference>
<dbReference type="InterPro" id="IPR009958">
    <property type="entry name" value="Conotoxin_a-typ"/>
</dbReference>
<dbReference type="Pfam" id="PF07365">
    <property type="entry name" value="Toxin_8"/>
    <property type="match status" value="1"/>
</dbReference>
<accession>E2DIH6</accession>
<organism>
    <name type="scientific">Conus victoriae</name>
    <name type="common">Queen Victoria cone</name>
    <dbReference type="NCBI Taxonomy" id="319920"/>
    <lineage>
        <taxon>Eukaryota</taxon>
        <taxon>Metazoa</taxon>
        <taxon>Spiralia</taxon>
        <taxon>Lophotrochozoa</taxon>
        <taxon>Mollusca</taxon>
        <taxon>Gastropoda</taxon>
        <taxon>Caenogastropoda</taxon>
        <taxon>Neogastropoda</taxon>
        <taxon>Conoidea</taxon>
        <taxon>Conidae</taxon>
        <taxon>Conus</taxon>
        <taxon>Cylinder</taxon>
    </lineage>
</organism>
<evidence type="ECO:0000250" key="1"/>
<evidence type="ECO:0000250" key="2">
    <source>
        <dbReference type="UniProtKB" id="P56636"/>
    </source>
</evidence>
<evidence type="ECO:0000255" key="3"/>
<evidence type="ECO:0000269" key="4">
    <source>
    </source>
</evidence>
<evidence type="ECO:0000305" key="5"/>
<evidence type="ECO:0000305" key="6">
    <source>
    </source>
</evidence>
<name>CA13_CONVC</name>
<protein>
    <recommendedName>
        <fullName>Conotoxin Vc1.3</fullName>
    </recommendedName>
</protein>
<proteinExistence type="evidence at transcript level"/>
<feature type="signal peptide" evidence="3">
    <location>
        <begin position="1"/>
        <end position="21"/>
    </location>
</feature>
<feature type="propeptide" id="PRO_0000425161" evidence="1">
    <location>
        <begin position="22"/>
        <end position="43"/>
    </location>
</feature>
<feature type="peptide" id="PRO_0000425162" description="Conotoxin Vc1.3">
    <location>
        <begin position="45"/>
        <end position="60"/>
    </location>
</feature>
<feature type="modified residue" description="Cysteine amide" evidence="1">
    <location>
        <position position="60"/>
    </location>
</feature>
<feature type="disulfide bond" evidence="2">
    <location>
        <begin position="46"/>
        <end position="52"/>
    </location>
</feature>
<feature type="disulfide bond" evidence="2">
    <location>
        <begin position="47"/>
        <end position="60"/>
    </location>
</feature>
<reference key="1">
    <citation type="journal article" date="2011" name="J. Biol. Chem.">
        <title>Embryonic toxin expression in the cone snail Conus victoriae: primed to kill or divergent function?</title>
        <authorList>
            <person name="Safavi-Hemami H."/>
            <person name="Siero W.A."/>
            <person name="Kuang Z."/>
            <person name="Williamson N.A."/>
            <person name="Karas J.A."/>
            <person name="Page L.R."/>
            <person name="Macmillan D."/>
            <person name="Callaghan B."/>
            <person name="Kompella S.N."/>
            <person name="Adams D.J."/>
            <person name="Norton R.S."/>
            <person name="Purcell A.W."/>
        </authorList>
    </citation>
    <scope>NUCLEOTIDE SEQUENCE [MRNA]</scope>
    <scope>SYNTHESIS OF 45-60</scope>
    <scope>DEVELOPMENTAL STAGE</scope>
    <source>
        <tissue>Embryo</tissue>
        <tissue>Venom duct</tissue>
    </source>
</reference>
<comment type="function">
    <text evidence="1">May act as a toxin.</text>
</comment>
<comment type="subcellular location">
    <subcellularLocation>
        <location evidence="6">Secreted</location>
    </subcellularLocation>
</comment>
<comment type="tissue specificity">
    <text evidence="6">Expressed by the venom duct.</text>
</comment>
<comment type="developmental stage">
    <text evidence="4">Mostly expressed in embryos. Also slightly expressed in adults, but the toxin is not found in adult venom.</text>
</comment>
<comment type="domain">
    <text evidence="5">The cysteine framework is I (CC-C-C). Alpha4/7 pattern.</text>
</comment>
<comment type="miscellaneous">
    <text evidence="6">Negative results: does not show activity on alpha-3/beta-2 (CHRNA3/CHRNB2), alpha-7 (CHRNA7), alpha-9/alpha-10 (CHRNA9/CHRNA10), alpha-3/beta-4 (CHRNA3/CHRNB4), alpha-4/beta-2 (CHRNA4/CHRNB2) and alpha-4/beta-4 (CHRNA4/CHRNB4) acetylcholine receptors. Does not show inhibition on high-voltage activated (HVA) calcium channels currents that are mediated by GABA-B receptors.</text>
</comment>
<comment type="similarity">
    <text evidence="5">Belongs to the conotoxin A superfamily.</text>
</comment>
<sequence length="64" mass="6896">MGMRMMFTVFLLVVLATTVVSFTSDRASDGRKAAASDLITLTIKGCCSDPPCIANNPDLCGRRR</sequence>